<name>RBFA_SHEB8</name>
<comment type="function">
    <text evidence="1">One of several proteins that assist in the late maturation steps of the functional core of the 30S ribosomal subunit. Associates with free 30S ribosomal subunits (but not with 30S subunits that are part of 70S ribosomes or polysomes). Required for efficient processing of 16S rRNA. May interact with the 5'-terminal helix region of 16S rRNA.</text>
</comment>
<comment type="subunit">
    <text evidence="1">Monomer. Binds 30S ribosomal subunits, but not 50S ribosomal subunits or 70S ribosomes.</text>
</comment>
<comment type="subcellular location">
    <subcellularLocation>
        <location evidence="1">Cytoplasm</location>
    </subcellularLocation>
</comment>
<comment type="similarity">
    <text evidence="1">Belongs to the RbfA family.</text>
</comment>
<gene>
    <name evidence="1" type="primary">rbfA</name>
    <name type="ordered locus">Shew185_3279</name>
</gene>
<accession>A6WRG7</accession>
<feature type="chain" id="PRO_0000321254" description="Ribosome-binding factor A">
    <location>
        <begin position="1"/>
        <end position="157"/>
    </location>
</feature>
<feature type="region of interest" description="Disordered" evidence="2">
    <location>
        <begin position="127"/>
        <end position="157"/>
    </location>
</feature>
<feature type="compositionally biased region" description="Acidic residues" evidence="2">
    <location>
        <begin position="135"/>
        <end position="157"/>
    </location>
</feature>
<reference key="1">
    <citation type="submission" date="2007-07" db="EMBL/GenBank/DDBJ databases">
        <title>Complete sequence of chromosome of Shewanella baltica OS185.</title>
        <authorList>
            <consortium name="US DOE Joint Genome Institute"/>
            <person name="Copeland A."/>
            <person name="Lucas S."/>
            <person name="Lapidus A."/>
            <person name="Barry K."/>
            <person name="Glavina del Rio T."/>
            <person name="Dalin E."/>
            <person name="Tice H."/>
            <person name="Pitluck S."/>
            <person name="Sims D."/>
            <person name="Brettin T."/>
            <person name="Bruce D."/>
            <person name="Detter J.C."/>
            <person name="Han C."/>
            <person name="Schmutz J."/>
            <person name="Larimer F."/>
            <person name="Land M."/>
            <person name="Hauser L."/>
            <person name="Kyrpides N."/>
            <person name="Mikhailova N."/>
            <person name="Brettar I."/>
            <person name="Rodrigues J."/>
            <person name="Konstantinidis K."/>
            <person name="Tiedje J."/>
            <person name="Richardson P."/>
        </authorList>
    </citation>
    <scope>NUCLEOTIDE SEQUENCE [LARGE SCALE GENOMIC DNA]</scope>
    <source>
        <strain>OS185</strain>
    </source>
</reference>
<proteinExistence type="inferred from homology"/>
<organism>
    <name type="scientific">Shewanella baltica (strain OS185)</name>
    <dbReference type="NCBI Taxonomy" id="402882"/>
    <lineage>
        <taxon>Bacteria</taxon>
        <taxon>Pseudomonadati</taxon>
        <taxon>Pseudomonadota</taxon>
        <taxon>Gammaproteobacteria</taxon>
        <taxon>Alteromonadales</taxon>
        <taxon>Shewanellaceae</taxon>
        <taxon>Shewanella</taxon>
    </lineage>
</organism>
<protein>
    <recommendedName>
        <fullName evidence="1">Ribosome-binding factor A</fullName>
    </recommendedName>
</protein>
<sequence length="157" mass="17851">MVRNIMAKEFSRTRRIAQQLQQELAQVLQRDMKDPRIGFVTVNDVDVSRDLSYAKVFVTFFEEDKAVVQEKLNALISAAPYIRTLVAGRMKLRVMPELRFIYDSSLVEGMRMSNLVSQVINQDKAKQQQFGSEDASVEDEVLGDDVADDADETEGKD</sequence>
<dbReference type="EMBL" id="CP000753">
    <property type="protein sequence ID" value="ABS09406.1"/>
    <property type="molecule type" value="Genomic_DNA"/>
</dbReference>
<dbReference type="SMR" id="A6WRG7"/>
<dbReference type="KEGG" id="sbm:Shew185_3279"/>
<dbReference type="HOGENOM" id="CLU_089475_5_0_6"/>
<dbReference type="GO" id="GO:0005829">
    <property type="term" value="C:cytosol"/>
    <property type="evidence" value="ECO:0007669"/>
    <property type="project" value="TreeGrafter"/>
</dbReference>
<dbReference type="GO" id="GO:0043024">
    <property type="term" value="F:ribosomal small subunit binding"/>
    <property type="evidence" value="ECO:0007669"/>
    <property type="project" value="TreeGrafter"/>
</dbReference>
<dbReference type="GO" id="GO:0030490">
    <property type="term" value="P:maturation of SSU-rRNA"/>
    <property type="evidence" value="ECO:0007669"/>
    <property type="project" value="UniProtKB-UniRule"/>
</dbReference>
<dbReference type="FunFam" id="3.30.300.20:FF:000007">
    <property type="entry name" value="Ribosome-binding factor A"/>
    <property type="match status" value="1"/>
</dbReference>
<dbReference type="Gene3D" id="3.30.300.20">
    <property type="match status" value="1"/>
</dbReference>
<dbReference type="HAMAP" id="MF_00003">
    <property type="entry name" value="RbfA"/>
    <property type="match status" value="1"/>
</dbReference>
<dbReference type="InterPro" id="IPR015946">
    <property type="entry name" value="KH_dom-like_a/b"/>
</dbReference>
<dbReference type="InterPro" id="IPR000238">
    <property type="entry name" value="RbfA"/>
</dbReference>
<dbReference type="InterPro" id="IPR023799">
    <property type="entry name" value="RbfA_dom_sf"/>
</dbReference>
<dbReference type="InterPro" id="IPR020053">
    <property type="entry name" value="Ribosome-bd_factorA_CS"/>
</dbReference>
<dbReference type="NCBIfam" id="TIGR00082">
    <property type="entry name" value="rbfA"/>
    <property type="match status" value="1"/>
</dbReference>
<dbReference type="PANTHER" id="PTHR33515">
    <property type="entry name" value="RIBOSOME-BINDING FACTOR A, CHLOROPLASTIC-RELATED"/>
    <property type="match status" value="1"/>
</dbReference>
<dbReference type="PANTHER" id="PTHR33515:SF1">
    <property type="entry name" value="RIBOSOME-BINDING FACTOR A, CHLOROPLASTIC-RELATED"/>
    <property type="match status" value="1"/>
</dbReference>
<dbReference type="Pfam" id="PF02033">
    <property type="entry name" value="RBFA"/>
    <property type="match status" value="1"/>
</dbReference>
<dbReference type="SUPFAM" id="SSF89919">
    <property type="entry name" value="Ribosome-binding factor A, RbfA"/>
    <property type="match status" value="1"/>
</dbReference>
<dbReference type="PROSITE" id="PS01319">
    <property type="entry name" value="RBFA"/>
    <property type="match status" value="1"/>
</dbReference>
<evidence type="ECO:0000255" key="1">
    <source>
        <dbReference type="HAMAP-Rule" id="MF_00003"/>
    </source>
</evidence>
<evidence type="ECO:0000256" key="2">
    <source>
        <dbReference type="SAM" id="MobiDB-lite"/>
    </source>
</evidence>
<keyword id="KW-0963">Cytoplasm</keyword>
<keyword id="KW-0690">Ribosome biogenesis</keyword>